<keyword id="KW-1185">Reference proteome</keyword>
<keyword id="KW-0687">Ribonucleoprotein</keyword>
<keyword id="KW-0689">Ribosomal protein</keyword>
<keyword id="KW-0694">RNA-binding</keyword>
<keyword id="KW-0699">rRNA-binding</keyword>
<accession>A4VHP5</accession>
<organism>
    <name type="scientific">Stutzerimonas stutzeri (strain A1501)</name>
    <name type="common">Pseudomonas stutzeri</name>
    <dbReference type="NCBI Taxonomy" id="379731"/>
    <lineage>
        <taxon>Bacteria</taxon>
        <taxon>Pseudomonadati</taxon>
        <taxon>Pseudomonadota</taxon>
        <taxon>Gammaproteobacteria</taxon>
        <taxon>Pseudomonadales</taxon>
        <taxon>Pseudomonadaceae</taxon>
        <taxon>Stutzerimonas</taxon>
    </lineage>
</organism>
<name>RL6_STUS1</name>
<reference key="1">
    <citation type="journal article" date="2008" name="Proc. Natl. Acad. Sci. U.S.A.">
        <title>Nitrogen fixation island and rhizosphere competence traits in the genome of root-associated Pseudomonas stutzeri A1501.</title>
        <authorList>
            <person name="Yan Y."/>
            <person name="Yang J."/>
            <person name="Dou Y."/>
            <person name="Chen M."/>
            <person name="Ping S."/>
            <person name="Peng J."/>
            <person name="Lu W."/>
            <person name="Zhang W."/>
            <person name="Yao Z."/>
            <person name="Li H."/>
            <person name="Liu W."/>
            <person name="He S."/>
            <person name="Geng L."/>
            <person name="Zhang X."/>
            <person name="Yang F."/>
            <person name="Yu H."/>
            <person name="Zhan Y."/>
            <person name="Li D."/>
            <person name="Lin Z."/>
            <person name="Wang Y."/>
            <person name="Elmerich C."/>
            <person name="Lin M."/>
            <person name="Jin Q."/>
        </authorList>
    </citation>
    <scope>NUCLEOTIDE SEQUENCE [LARGE SCALE GENOMIC DNA]</scope>
    <source>
        <strain>A1501</strain>
    </source>
</reference>
<evidence type="ECO:0000255" key="1">
    <source>
        <dbReference type="HAMAP-Rule" id="MF_01365"/>
    </source>
</evidence>
<evidence type="ECO:0000305" key="2"/>
<sequence>MSRVAKNPVKLPAGVEIKMSGQQLSVKGAKGALELNVHPSVEVIQEGGELRFAGRNGDQQTRAMAGTTRALVNNMVIGVSQGFERKLQLVGVGYKAQAKGQVLSLALGFSHPVDYELPQGVTAETPSQTDILIKGVDKQLVGQVAAEIRDFRRPEPYKGKGVRYSDEVVRRKEAKKK</sequence>
<gene>
    <name evidence="1" type="primary">rplF</name>
    <name type="ordered locus">PST_0799</name>
</gene>
<dbReference type="EMBL" id="CP000304">
    <property type="protein sequence ID" value="ABP78496.1"/>
    <property type="molecule type" value="Genomic_DNA"/>
</dbReference>
<dbReference type="RefSeq" id="WP_011911994.1">
    <property type="nucleotide sequence ID" value="NC_009434.1"/>
</dbReference>
<dbReference type="SMR" id="A4VHP5"/>
<dbReference type="GeneID" id="66819941"/>
<dbReference type="KEGG" id="psa:PST_0799"/>
<dbReference type="eggNOG" id="COG0097">
    <property type="taxonomic scope" value="Bacteria"/>
</dbReference>
<dbReference type="HOGENOM" id="CLU_065464_1_2_6"/>
<dbReference type="Proteomes" id="UP000000233">
    <property type="component" value="Chromosome"/>
</dbReference>
<dbReference type="GO" id="GO:0022625">
    <property type="term" value="C:cytosolic large ribosomal subunit"/>
    <property type="evidence" value="ECO:0007669"/>
    <property type="project" value="TreeGrafter"/>
</dbReference>
<dbReference type="GO" id="GO:0019843">
    <property type="term" value="F:rRNA binding"/>
    <property type="evidence" value="ECO:0007669"/>
    <property type="project" value="UniProtKB-UniRule"/>
</dbReference>
<dbReference type="GO" id="GO:0003735">
    <property type="term" value="F:structural constituent of ribosome"/>
    <property type="evidence" value="ECO:0007669"/>
    <property type="project" value="InterPro"/>
</dbReference>
<dbReference type="GO" id="GO:0002181">
    <property type="term" value="P:cytoplasmic translation"/>
    <property type="evidence" value="ECO:0007669"/>
    <property type="project" value="TreeGrafter"/>
</dbReference>
<dbReference type="FunFam" id="3.90.930.12:FF:000001">
    <property type="entry name" value="50S ribosomal protein L6"/>
    <property type="match status" value="1"/>
</dbReference>
<dbReference type="FunFam" id="3.90.930.12:FF:000002">
    <property type="entry name" value="50S ribosomal protein L6"/>
    <property type="match status" value="1"/>
</dbReference>
<dbReference type="Gene3D" id="3.90.930.12">
    <property type="entry name" value="Ribosomal protein L6, alpha-beta domain"/>
    <property type="match status" value="2"/>
</dbReference>
<dbReference type="HAMAP" id="MF_01365_B">
    <property type="entry name" value="Ribosomal_uL6_B"/>
    <property type="match status" value="1"/>
</dbReference>
<dbReference type="InterPro" id="IPR000702">
    <property type="entry name" value="Ribosomal_uL6-like"/>
</dbReference>
<dbReference type="InterPro" id="IPR036789">
    <property type="entry name" value="Ribosomal_uL6-like_a/b-dom_sf"/>
</dbReference>
<dbReference type="InterPro" id="IPR020040">
    <property type="entry name" value="Ribosomal_uL6_a/b-dom"/>
</dbReference>
<dbReference type="InterPro" id="IPR019906">
    <property type="entry name" value="Ribosomal_uL6_bac-type"/>
</dbReference>
<dbReference type="InterPro" id="IPR002358">
    <property type="entry name" value="Ribosomal_uL6_CS"/>
</dbReference>
<dbReference type="NCBIfam" id="TIGR03654">
    <property type="entry name" value="L6_bact"/>
    <property type="match status" value="1"/>
</dbReference>
<dbReference type="PANTHER" id="PTHR11655">
    <property type="entry name" value="60S/50S RIBOSOMAL PROTEIN L6/L9"/>
    <property type="match status" value="1"/>
</dbReference>
<dbReference type="PANTHER" id="PTHR11655:SF14">
    <property type="entry name" value="LARGE RIBOSOMAL SUBUNIT PROTEIN UL6M"/>
    <property type="match status" value="1"/>
</dbReference>
<dbReference type="Pfam" id="PF00347">
    <property type="entry name" value="Ribosomal_L6"/>
    <property type="match status" value="2"/>
</dbReference>
<dbReference type="PIRSF" id="PIRSF002162">
    <property type="entry name" value="Ribosomal_L6"/>
    <property type="match status" value="1"/>
</dbReference>
<dbReference type="PRINTS" id="PR00059">
    <property type="entry name" value="RIBOSOMALL6"/>
</dbReference>
<dbReference type="SUPFAM" id="SSF56053">
    <property type="entry name" value="Ribosomal protein L6"/>
    <property type="match status" value="2"/>
</dbReference>
<dbReference type="PROSITE" id="PS00525">
    <property type="entry name" value="RIBOSOMAL_L6_1"/>
    <property type="match status" value="1"/>
</dbReference>
<feature type="chain" id="PRO_1000055290" description="Large ribosomal subunit protein uL6">
    <location>
        <begin position="1"/>
        <end position="177"/>
    </location>
</feature>
<proteinExistence type="inferred from homology"/>
<comment type="function">
    <text evidence="1">This protein binds to the 23S rRNA, and is important in its secondary structure. It is located near the subunit interface in the base of the L7/L12 stalk, and near the tRNA binding site of the peptidyltransferase center.</text>
</comment>
<comment type="subunit">
    <text evidence="1">Part of the 50S ribosomal subunit.</text>
</comment>
<comment type="similarity">
    <text evidence="1">Belongs to the universal ribosomal protein uL6 family.</text>
</comment>
<protein>
    <recommendedName>
        <fullName evidence="1">Large ribosomal subunit protein uL6</fullName>
    </recommendedName>
    <alternativeName>
        <fullName evidence="2">50S ribosomal protein L6</fullName>
    </alternativeName>
</protein>